<keyword id="KW-1003">Cell membrane</keyword>
<keyword id="KW-0449">Lipoprotein</keyword>
<keyword id="KW-0472">Membrane</keyword>
<keyword id="KW-0564">Palmitate</keyword>
<keyword id="KW-1185">Reference proteome</keyword>
<keyword id="KW-0732">Signal</keyword>
<accession>O83469</accession>
<name>Y456_TREPA</name>
<comment type="subcellular location">
    <subcellularLocation>
        <location evidence="1">Cell membrane</location>
        <topology evidence="1">Lipid-anchor</topology>
    </subcellularLocation>
</comment>
<organism>
    <name type="scientific">Treponema pallidum (strain Nichols)</name>
    <dbReference type="NCBI Taxonomy" id="243276"/>
    <lineage>
        <taxon>Bacteria</taxon>
        <taxon>Pseudomonadati</taxon>
        <taxon>Spirochaetota</taxon>
        <taxon>Spirochaetia</taxon>
        <taxon>Spirochaetales</taxon>
        <taxon>Treponemataceae</taxon>
        <taxon>Treponema</taxon>
    </lineage>
</organism>
<proteinExistence type="inferred from homology"/>
<protein>
    <recommendedName>
        <fullName>Uncharacterized lipoprotein TP_0456</fullName>
    </recommendedName>
</protein>
<reference key="1">
    <citation type="journal article" date="1998" name="Science">
        <title>Complete genome sequence of Treponema pallidum, the syphilis spirochete.</title>
        <authorList>
            <person name="Fraser C.M."/>
            <person name="Norris S.J."/>
            <person name="Weinstock G.M."/>
            <person name="White O."/>
            <person name="Sutton G.G."/>
            <person name="Dodson R.J."/>
            <person name="Gwinn M.L."/>
            <person name="Hickey E.K."/>
            <person name="Clayton R.A."/>
            <person name="Ketchum K.A."/>
            <person name="Sodergren E."/>
            <person name="Hardham J.M."/>
            <person name="McLeod M.P."/>
            <person name="Salzberg S.L."/>
            <person name="Peterson J.D."/>
            <person name="Khalak H.G."/>
            <person name="Richardson D.L."/>
            <person name="Howell J.K."/>
            <person name="Chidambaram M."/>
            <person name="Utterback T.R."/>
            <person name="McDonald L.A."/>
            <person name="Artiach P."/>
            <person name="Bowman C."/>
            <person name="Cotton M.D."/>
            <person name="Fujii C."/>
            <person name="Garland S.A."/>
            <person name="Hatch B."/>
            <person name="Horst K."/>
            <person name="Roberts K.M."/>
            <person name="Sandusky M."/>
            <person name="Weidman J.F."/>
            <person name="Smith H.O."/>
            <person name="Venter J.C."/>
        </authorList>
    </citation>
    <scope>NUCLEOTIDE SEQUENCE [LARGE SCALE GENOMIC DNA]</scope>
    <source>
        <strain>Nichols</strain>
    </source>
</reference>
<gene>
    <name type="ordered locus">TP_0456</name>
</gene>
<sequence>MNTRLALVLCAVGSGVLSFSCARTAEPTPAASTHVPVTTAGALSVTPPSSTDRWYQFSRTDGRVHLRACPAPSQPSAPEHFVPWTEAVRLSAVDAQQELLLINRAGVLPATQLARMQTAPVPRKAPSTPAAETTSLTLTPPALLATQSAEGFYSEPIPNSSPHPCQGTGAVFVRLYTDPLFTTSPQDSAAPFLVRYDVRTARWTSVAYTRALGLPRNAQCTALTHTRGTWYASFKSSEAERVSFAYFSFPSLSSLENLGPTQRREHPIGGKVQVPRPISAAAFRAACTPQRLHLPTASTSSDHHSDLHELLVHRLLARVPLSPLYLSARSPCWASDRSFLKTAHRTADERAHHANALIFHPPRARLSAALLTDSGHLYFVREDGSEGHARLSALPPQFVYTSFTLSGPSLIAGWEEQDFFQVGSTGLLCTEVESLTGT</sequence>
<dbReference type="EMBL" id="AE000520">
    <property type="protein sequence ID" value="AAC65445.1"/>
    <property type="molecule type" value="Genomic_DNA"/>
</dbReference>
<dbReference type="PIR" id="A71323">
    <property type="entry name" value="A71323"/>
</dbReference>
<dbReference type="RefSeq" id="WP_010881905.1">
    <property type="nucleotide sequence ID" value="NC_021490.2"/>
</dbReference>
<dbReference type="STRING" id="243276.TP_0456"/>
<dbReference type="EnsemblBacteria" id="AAC65445">
    <property type="protein sequence ID" value="AAC65445"/>
    <property type="gene ID" value="TP_0456"/>
</dbReference>
<dbReference type="KEGG" id="tpa:TP_0456"/>
<dbReference type="KEGG" id="tpw:TPANIC_0456"/>
<dbReference type="eggNOG" id="ENOG5032P03">
    <property type="taxonomic scope" value="Bacteria"/>
</dbReference>
<dbReference type="HOGENOM" id="CLU_064740_0_0_12"/>
<dbReference type="OrthoDB" id="356296at2"/>
<dbReference type="Proteomes" id="UP000000811">
    <property type="component" value="Chromosome"/>
</dbReference>
<dbReference type="GO" id="GO:0005886">
    <property type="term" value="C:plasma membrane"/>
    <property type="evidence" value="ECO:0007669"/>
    <property type="project" value="UniProtKB-SubCell"/>
</dbReference>
<dbReference type="PROSITE" id="PS51257">
    <property type="entry name" value="PROKAR_LIPOPROTEIN"/>
    <property type="match status" value="1"/>
</dbReference>
<evidence type="ECO:0000255" key="1">
    <source>
        <dbReference type="PROSITE-ProRule" id="PRU00303"/>
    </source>
</evidence>
<feature type="signal peptide" evidence="1">
    <location>
        <begin position="1"/>
        <end position="20"/>
    </location>
</feature>
<feature type="chain" id="PRO_0000014250" description="Uncharacterized lipoprotein TP_0456">
    <location>
        <begin position="21"/>
        <end position="438"/>
    </location>
</feature>
<feature type="lipid moiety-binding region" description="N-palmitoyl cysteine" evidence="1">
    <location>
        <position position="21"/>
    </location>
</feature>
<feature type="lipid moiety-binding region" description="S-diacylglycerol cysteine" evidence="1">
    <location>
        <position position="21"/>
    </location>
</feature>